<sequence>MSVFGKLFGAGGGKAGKGGPTPQEAIQRLRDTEEMLSKKQEFLEKKIEQELTAAKKHGTKNKRAALQALKRKKRYEKQLAQIDGTLSTIEFQREALENANTNTEVLKNMGYAAKAMKAAHDNMDIDKVDELMQDIADQQELAEEISTAISKPVGFGEEFDEDELMAELEELEQEELDKNLLEISGPETVPLPNVPSVALPSKPAKKKEEEDDDMKELENWAGSM</sequence>
<keyword id="KW-0007">Acetylation</keyword>
<keyword id="KW-0175">Coiled coil</keyword>
<keyword id="KW-0963">Cytoplasm</keyword>
<keyword id="KW-0967">Endosome</keyword>
<keyword id="KW-0472">Membrane</keyword>
<keyword id="KW-0539">Nucleus</keyword>
<keyword id="KW-0597">Phosphoprotein</keyword>
<keyword id="KW-0653">Protein transport</keyword>
<keyword id="KW-1185">Reference proteome</keyword>
<keyword id="KW-0813">Transport</keyword>
<keyword id="KW-0832">Ubl conjugation</keyword>
<feature type="initiator methionine" description="Removed" evidence="6">
    <location>
        <position position="1"/>
    </location>
</feature>
<feature type="chain" id="PRO_0000211490" description="Charged multivesicular body protein 4b">
    <location>
        <begin position="2"/>
        <end position="224"/>
    </location>
</feature>
<feature type="region of interest" description="Disordered" evidence="4">
    <location>
        <begin position="1"/>
        <end position="23"/>
    </location>
</feature>
<feature type="region of interest" description="Intramolecular interaction with C-terminus" evidence="1">
    <location>
        <begin position="2"/>
        <end position="153"/>
    </location>
</feature>
<feature type="region of interest" description="Intramolecular interaction with N-terminus" evidence="1">
    <location>
        <begin position="154"/>
        <end position="224"/>
    </location>
</feature>
<feature type="region of interest" description="Disordered" evidence="4">
    <location>
        <begin position="185"/>
        <end position="224"/>
    </location>
</feature>
<feature type="coiled-coil region" evidence="3">
    <location>
        <begin position="23"/>
        <end position="183"/>
    </location>
</feature>
<feature type="compositionally biased region" description="Gly residues" evidence="4">
    <location>
        <begin position="8"/>
        <end position="19"/>
    </location>
</feature>
<feature type="modified residue" description="N-acetylserine" evidence="6">
    <location>
        <position position="2"/>
    </location>
</feature>
<feature type="modified residue" description="N6-acetyllysine" evidence="6">
    <location>
        <position position="6"/>
    </location>
</feature>
<feature type="modified residue" description="N6-acetyllysine" evidence="2">
    <location>
        <position position="114"/>
    </location>
</feature>
<feature type="modified residue" description="Phosphoserine" evidence="2">
    <location>
        <position position="184"/>
    </location>
</feature>
<feature type="modified residue" description="Phosphoserine" evidence="2">
    <location>
        <position position="223"/>
    </location>
</feature>
<feature type="sequence conflict" description="In Ref. 1; AK008205." evidence="5" ref="1">
    <original>E</original>
    <variation>K</variation>
    <location>
        <position position="167"/>
    </location>
</feature>
<reference key="1">
    <citation type="journal article" date="2005" name="Science">
        <title>The transcriptional landscape of the mammalian genome.</title>
        <authorList>
            <person name="Carninci P."/>
            <person name="Kasukawa T."/>
            <person name="Katayama S."/>
            <person name="Gough J."/>
            <person name="Frith M.C."/>
            <person name="Maeda N."/>
            <person name="Oyama R."/>
            <person name="Ravasi T."/>
            <person name="Lenhard B."/>
            <person name="Wells C."/>
            <person name="Kodzius R."/>
            <person name="Shimokawa K."/>
            <person name="Bajic V.B."/>
            <person name="Brenner S.E."/>
            <person name="Batalov S."/>
            <person name="Forrest A.R."/>
            <person name="Zavolan M."/>
            <person name="Davis M.J."/>
            <person name="Wilming L.G."/>
            <person name="Aidinis V."/>
            <person name="Allen J.E."/>
            <person name="Ambesi-Impiombato A."/>
            <person name="Apweiler R."/>
            <person name="Aturaliya R.N."/>
            <person name="Bailey T.L."/>
            <person name="Bansal M."/>
            <person name="Baxter L."/>
            <person name="Beisel K.W."/>
            <person name="Bersano T."/>
            <person name="Bono H."/>
            <person name="Chalk A.M."/>
            <person name="Chiu K.P."/>
            <person name="Choudhary V."/>
            <person name="Christoffels A."/>
            <person name="Clutterbuck D.R."/>
            <person name="Crowe M.L."/>
            <person name="Dalla E."/>
            <person name="Dalrymple B.P."/>
            <person name="de Bono B."/>
            <person name="Della Gatta G."/>
            <person name="di Bernardo D."/>
            <person name="Down T."/>
            <person name="Engstrom P."/>
            <person name="Fagiolini M."/>
            <person name="Faulkner G."/>
            <person name="Fletcher C.F."/>
            <person name="Fukushima T."/>
            <person name="Furuno M."/>
            <person name="Futaki S."/>
            <person name="Gariboldi M."/>
            <person name="Georgii-Hemming P."/>
            <person name="Gingeras T.R."/>
            <person name="Gojobori T."/>
            <person name="Green R.E."/>
            <person name="Gustincich S."/>
            <person name="Harbers M."/>
            <person name="Hayashi Y."/>
            <person name="Hensch T.K."/>
            <person name="Hirokawa N."/>
            <person name="Hill D."/>
            <person name="Huminiecki L."/>
            <person name="Iacono M."/>
            <person name="Ikeo K."/>
            <person name="Iwama A."/>
            <person name="Ishikawa T."/>
            <person name="Jakt M."/>
            <person name="Kanapin A."/>
            <person name="Katoh M."/>
            <person name="Kawasawa Y."/>
            <person name="Kelso J."/>
            <person name="Kitamura H."/>
            <person name="Kitano H."/>
            <person name="Kollias G."/>
            <person name="Krishnan S.P."/>
            <person name="Kruger A."/>
            <person name="Kummerfeld S.K."/>
            <person name="Kurochkin I.V."/>
            <person name="Lareau L.F."/>
            <person name="Lazarevic D."/>
            <person name="Lipovich L."/>
            <person name="Liu J."/>
            <person name="Liuni S."/>
            <person name="McWilliam S."/>
            <person name="Madan Babu M."/>
            <person name="Madera M."/>
            <person name="Marchionni L."/>
            <person name="Matsuda H."/>
            <person name="Matsuzawa S."/>
            <person name="Miki H."/>
            <person name="Mignone F."/>
            <person name="Miyake S."/>
            <person name="Morris K."/>
            <person name="Mottagui-Tabar S."/>
            <person name="Mulder N."/>
            <person name="Nakano N."/>
            <person name="Nakauchi H."/>
            <person name="Ng P."/>
            <person name="Nilsson R."/>
            <person name="Nishiguchi S."/>
            <person name="Nishikawa S."/>
            <person name="Nori F."/>
            <person name="Ohara O."/>
            <person name="Okazaki Y."/>
            <person name="Orlando V."/>
            <person name="Pang K.C."/>
            <person name="Pavan W.J."/>
            <person name="Pavesi G."/>
            <person name="Pesole G."/>
            <person name="Petrovsky N."/>
            <person name="Piazza S."/>
            <person name="Reed J."/>
            <person name="Reid J.F."/>
            <person name="Ring B.Z."/>
            <person name="Ringwald M."/>
            <person name="Rost B."/>
            <person name="Ruan Y."/>
            <person name="Salzberg S.L."/>
            <person name="Sandelin A."/>
            <person name="Schneider C."/>
            <person name="Schoenbach C."/>
            <person name="Sekiguchi K."/>
            <person name="Semple C.A."/>
            <person name="Seno S."/>
            <person name="Sessa L."/>
            <person name="Sheng Y."/>
            <person name="Shibata Y."/>
            <person name="Shimada H."/>
            <person name="Shimada K."/>
            <person name="Silva D."/>
            <person name="Sinclair B."/>
            <person name="Sperling S."/>
            <person name="Stupka E."/>
            <person name="Sugiura K."/>
            <person name="Sultana R."/>
            <person name="Takenaka Y."/>
            <person name="Taki K."/>
            <person name="Tammoja K."/>
            <person name="Tan S.L."/>
            <person name="Tang S."/>
            <person name="Taylor M.S."/>
            <person name="Tegner J."/>
            <person name="Teichmann S.A."/>
            <person name="Ueda H.R."/>
            <person name="van Nimwegen E."/>
            <person name="Verardo R."/>
            <person name="Wei C.L."/>
            <person name="Yagi K."/>
            <person name="Yamanishi H."/>
            <person name="Zabarovsky E."/>
            <person name="Zhu S."/>
            <person name="Zimmer A."/>
            <person name="Hide W."/>
            <person name="Bult C."/>
            <person name="Grimmond S.M."/>
            <person name="Teasdale R.D."/>
            <person name="Liu E.T."/>
            <person name="Brusic V."/>
            <person name="Quackenbush J."/>
            <person name="Wahlestedt C."/>
            <person name="Mattick J.S."/>
            <person name="Hume D.A."/>
            <person name="Kai C."/>
            <person name="Sasaki D."/>
            <person name="Tomaru Y."/>
            <person name="Fukuda S."/>
            <person name="Kanamori-Katayama M."/>
            <person name="Suzuki M."/>
            <person name="Aoki J."/>
            <person name="Arakawa T."/>
            <person name="Iida J."/>
            <person name="Imamura K."/>
            <person name="Itoh M."/>
            <person name="Kato T."/>
            <person name="Kawaji H."/>
            <person name="Kawagashira N."/>
            <person name="Kawashima T."/>
            <person name="Kojima M."/>
            <person name="Kondo S."/>
            <person name="Konno H."/>
            <person name="Nakano K."/>
            <person name="Ninomiya N."/>
            <person name="Nishio T."/>
            <person name="Okada M."/>
            <person name="Plessy C."/>
            <person name="Shibata K."/>
            <person name="Shiraki T."/>
            <person name="Suzuki S."/>
            <person name="Tagami M."/>
            <person name="Waki K."/>
            <person name="Watahiki A."/>
            <person name="Okamura-Oho Y."/>
            <person name="Suzuki H."/>
            <person name="Kawai J."/>
            <person name="Hayashizaki Y."/>
        </authorList>
    </citation>
    <scope>NUCLEOTIDE SEQUENCE [LARGE SCALE MRNA]</scope>
    <source>
        <strain>C57BL/6J</strain>
        <strain>NOD</strain>
        <tissue>Small intestine</tissue>
        <tissue>Spleen</tissue>
    </source>
</reference>
<reference key="2">
    <citation type="journal article" date="2009" name="PLoS Biol.">
        <title>Lineage-specific biology revealed by a finished genome assembly of the mouse.</title>
        <authorList>
            <person name="Church D.M."/>
            <person name="Goodstadt L."/>
            <person name="Hillier L.W."/>
            <person name="Zody M.C."/>
            <person name="Goldstein S."/>
            <person name="She X."/>
            <person name="Bult C.J."/>
            <person name="Agarwala R."/>
            <person name="Cherry J.L."/>
            <person name="DiCuccio M."/>
            <person name="Hlavina W."/>
            <person name="Kapustin Y."/>
            <person name="Meric P."/>
            <person name="Maglott D."/>
            <person name="Birtle Z."/>
            <person name="Marques A.C."/>
            <person name="Graves T."/>
            <person name="Zhou S."/>
            <person name="Teague B."/>
            <person name="Potamousis K."/>
            <person name="Churas C."/>
            <person name="Place M."/>
            <person name="Herschleb J."/>
            <person name="Runnheim R."/>
            <person name="Forrest D."/>
            <person name="Amos-Landgraf J."/>
            <person name="Schwartz D.C."/>
            <person name="Cheng Z."/>
            <person name="Lindblad-Toh K."/>
            <person name="Eichler E.E."/>
            <person name="Ponting C.P."/>
        </authorList>
    </citation>
    <scope>NUCLEOTIDE SEQUENCE [LARGE SCALE GENOMIC DNA]</scope>
    <source>
        <strain>C57BL/6J</strain>
    </source>
</reference>
<reference key="3">
    <citation type="journal article" date="2004" name="Genome Res.">
        <title>The status, quality, and expansion of the NIH full-length cDNA project: the Mammalian Gene Collection (MGC).</title>
        <authorList>
            <consortium name="The MGC Project Team"/>
        </authorList>
    </citation>
    <scope>NUCLEOTIDE SEQUENCE [LARGE SCALE MRNA]</scope>
    <source>
        <tissue>Mammary tumor</tissue>
    </source>
</reference>
<reference key="4">
    <citation type="journal article" date="2010" name="Cell">
        <title>A tissue-specific atlas of mouse protein phosphorylation and expression.</title>
        <authorList>
            <person name="Huttlin E.L."/>
            <person name="Jedrychowski M.P."/>
            <person name="Elias J.E."/>
            <person name="Goswami T."/>
            <person name="Rad R."/>
            <person name="Beausoleil S.A."/>
            <person name="Villen J."/>
            <person name="Haas W."/>
            <person name="Sowa M.E."/>
            <person name="Gygi S.P."/>
        </authorList>
    </citation>
    <scope>IDENTIFICATION BY MASS SPECTROMETRY [LARGE SCALE ANALYSIS]</scope>
    <source>
        <tissue>Brain</tissue>
        <tissue>Brown adipose tissue</tissue>
        <tissue>Heart</tissue>
        <tissue>Kidney</tissue>
        <tissue>Liver</tissue>
        <tissue>Lung</tissue>
        <tissue>Pancreas</tissue>
        <tissue>Spleen</tissue>
        <tissue>Testis</tissue>
    </source>
</reference>
<reference key="5">
    <citation type="journal article" date="2013" name="Mol. Cell">
        <title>SIRT5-mediated lysine desuccinylation impacts diverse metabolic pathways.</title>
        <authorList>
            <person name="Park J."/>
            <person name="Chen Y."/>
            <person name="Tishkoff D.X."/>
            <person name="Peng C."/>
            <person name="Tan M."/>
            <person name="Dai L."/>
            <person name="Xie Z."/>
            <person name="Zhang Y."/>
            <person name="Zwaans B.M."/>
            <person name="Skinner M.E."/>
            <person name="Lombard D.B."/>
            <person name="Zhao Y."/>
        </authorList>
    </citation>
    <scope>ACETYLATION [LARGE SCALE ANALYSIS] AT SER-2 AND LYS-6</scope>
    <scope>CLEAVAGE OF INITIATOR METHIONINE [LARGE SCALE ANALYSIS]</scope>
    <scope>IDENTIFICATION BY MASS SPECTROMETRY [LARGE SCALE ANALYSIS]</scope>
    <source>
        <tissue>Embryonic fibroblast</tissue>
    </source>
</reference>
<organism>
    <name type="scientific">Mus musculus</name>
    <name type="common">Mouse</name>
    <dbReference type="NCBI Taxonomy" id="10090"/>
    <lineage>
        <taxon>Eukaryota</taxon>
        <taxon>Metazoa</taxon>
        <taxon>Chordata</taxon>
        <taxon>Craniata</taxon>
        <taxon>Vertebrata</taxon>
        <taxon>Euteleostomi</taxon>
        <taxon>Mammalia</taxon>
        <taxon>Eutheria</taxon>
        <taxon>Euarchontoglires</taxon>
        <taxon>Glires</taxon>
        <taxon>Rodentia</taxon>
        <taxon>Myomorpha</taxon>
        <taxon>Muroidea</taxon>
        <taxon>Muridae</taxon>
        <taxon>Murinae</taxon>
        <taxon>Mus</taxon>
        <taxon>Mus</taxon>
    </lineage>
</organism>
<gene>
    <name type="primary">Chmp4b</name>
</gene>
<accession>Q9D8B3</accession>
<accession>A2AVM1</accession>
<accession>Q3TXM7</accession>
<accession>Q91VM7</accession>
<accession>Q922P1</accession>
<name>CHM4B_MOUSE</name>
<protein>
    <recommendedName>
        <fullName>Charged multivesicular body protein 4b</fullName>
    </recommendedName>
    <alternativeName>
        <fullName>Chromatin-modifying protein 4b</fullName>
        <shortName>CHMP4b</shortName>
    </alternativeName>
</protein>
<evidence type="ECO:0000250" key="1"/>
<evidence type="ECO:0000250" key="2">
    <source>
        <dbReference type="UniProtKB" id="Q9H444"/>
    </source>
</evidence>
<evidence type="ECO:0000255" key="3"/>
<evidence type="ECO:0000256" key="4">
    <source>
        <dbReference type="SAM" id="MobiDB-lite"/>
    </source>
</evidence>
<evidence type="ECO:0000305" key="5"/>
<evidence type="ECO:0007744" key="6">
    <source>
    </source>
</evidence>
<dbReference type="EMBL" id="AK008205">
    <property type="status" value="NOT_ANNOTATED_CDS"/>
    <property type="molecule type" value="mRNA"/>
</dbReference>
<dbReference type="EMBL" id="AK156473">
    <property type="protein sequence ID" value="BAE33724.1"/>
    <property type="molecule type" value="mRNA"/>
</dbReference>
<dbReference type="EMBL" id="AK159193">
    <property type="protein sequence ID" value="BAE34888.1"/>
    <property type="molecule type" value="mRNA"/>
</dbReference>
<dbReference type="EMBL" id="AL929557">
    <property type="status" value="NOT_ANNOTATED_CDS"/>
    <property type="molecule type" value="Genomic_DNA"/>
</dbReference>
<dbReference type="EMBL" id="BC006905">
    <property type="protein sequence ID" value="AAH06905.1"/>
    <property type="status" value="ALT_INIT"/>
    <property type="molecule type" value="mRNA"/>
</dbReference>
<dbReference type="EMBL" id="BC011429">
    <property type="protein sequence ID" value="AAH11429.1"/>
    <property type="molecule type" value="mRNA"/>
</dbReference>
<dbReference type="EMBL" id="BC059279">
    <property type="protein sequence ID" value="AAH59279.1"/>
    <property type="molecule type" value="mRNA"/>
</dbReference>
<dbReference type="CCDS" id="CCDS16938.1"/>
<dbReference type="RefSeq" id="NP_083638.1">
    <property type="nucleotide sequence ID" value="NM_029362.4"/>
</dbReference>
<dbReference type="SMR" id="Q9D8B3"/>
<dbReference type="BioGRID" id="217613">
    <property type="interactions" value="98"/>
</dbReference>
<dbReference type="ComplexPortal" id="CPX-332">
    <property type="entry name" value="ESCRT-III complex, variant Chmp1b1"/>
</dbReference>
<dbReference type="ComplexPortal" id="CPX-333">
    <property type="entry name" value="ESCRT-III complex, variant Chmp1b2"/>
</dbReference>
<dbReference type="DIP" id="DIP-61322N"/>
<dbReference type="FunCoup" id="Q9D8B3">
    <property type="interactions" value="3299"/>
</dbReference>
<dbReference type="IntAct" id="Q9D8B3">
    <property type="interactions" value="87"/>
</dbReference>
<dbReference type="MINT" id="Q9D8B3"/>
<dbReference type="STRING" id="10090.ENSMUSP00000036206"/>
<dbReference type="TCDB" id="3.A.31.1.4">
    <property type="family name" value="the endosomal sorting complexes required for transport iii (escrt-iii) family"/>
</dbReference>
<dbReference type="GlyGen" id="Q9D8B3">
    <property type="glycosylation" value="1 site"/>
</dbReference>
<dbReference type="iPTMnet" id="Q9D8B3"/>
<dbReference type="PhosphoSitePlus" id="Q9D8B3"/>
<dbReference type="jPOST" id="Q9D8B3"/>
<dbReference type="PaxDb" id="10090-ENSMUSP00000036206"/>
<dbReference type="PeptideAtlas" id="Q9D8B3"/>
<dbReference type="ProteomicsDB" id="281557"/>
<dbReference type="Pumba" id="Q9D8B3"/>
<dbReference type="Antibodypedia" id="25737">
    <property type="antibodies" value="176 antibodies from 25 providers"/>
</dbReference>
<dbReference type="DNASU" id="75608"/>
<dbReference type="Ensembl" id="ENSMUST00000044277.10">
    <property type="protein sequence ID" value="ENSMUSP00000036206.10"/>
    <property type="gene ID" value="ENSMUSG00000038467.16"/>
</dbReference>
<dbReference type="GeneID" id="75608"/>
<dbReference type="KEGG" id="mmu:75608"/>
<dbReference type="UCSC" id="uc008njp.1">
    <property type="organism name" value="mouse"/>
</dbReference>
<dbReference type="AGR" id="MGI:1922858"/>
<dbReference type="CTD" id="128866"/>
<dbReference type="MGI" id="MGI:1922858">
    <property type="gene designation" value="Chmp4b"/>
</dbReference>
<dbReference type="VEuPathDB" id="HostDB:ENSMUSG00000038467"/>
<dbReference type="eggNOG" id="KOG1656">
    <property type="taxonomic scope" value="Eukaryota"/>
</dbReference>
<dbReference type="GeneTree" id="ENSGT00940000154663"/>
<dbReference type="HOGENOM" id="CLU_071097_0_0_1"/>
<dbReference type="InParanoid" id="Q9D8B3"/>
<dbReference type="OMA" id="MKQIHGG"/>
<dbReference type="OrthoDB" id="5592979at2759"/>
<dbReference type="PhylomeDB" id="Q9D8B3"/>
<dbReference type="TreeFam" id="TF314269"/>
<dbReference type="Reactome" id="R-MMU-1632852">
    <property type="pathway name" value="Macroautophagy"/>
</dbReference>
<dbReference type="Reactome" id="R-MMU-5620971">
    <property type="pathway name" value="Pyroptosis"/>
</dbReference>
<dbReference type="Reactome" id="R-MMU-917729">
    <property type="pathway name" value="Endosomal Sorting Complex Required For Transport (ESCRT)"/>
</dbReference>
<dbReference type="Reactome" id="R-MMU-9668328">
    <property type="pathway name" value="Sealing of the nuclear envelope (NE) by ESCRT-III"/>
</dbReference>
<dbReference type="BioGRID-ORCS" id="75608">
    <property type="hits" value="27 hits in 79 CRISPR screens"/>
</dbReference>
<dbReference type="CD-CODE" id="CE726F99">
    <property type="entry name" value="Postsynaptic density"/>
</dbReference>
<dbReference type="ChiTaRS" id="Chmp4b">
    <property type="organism name" value="mouse"/>
</dbReference>
<dbReference type="PRO" id="PR:Q9D8B3"/>
<dbReference type="Proteomes" id="UP000000589">
    <property type="component" value="Chromosome 2"/>
</dbReference>
<dbReference type="RNAct" id="Q9D8B3">
    <property type="molecule type" value="protein"/>
</dbReference>
<dbReference type="Bgee" id="ENSMUSG00000038467">
    <property type="expression patterns" value="Expressed in vestibular membrane of cochlear duct and 258 other cell types or tissues"/>
</dbReference>
<dbReference type="GO" id="GO:1904930">
    <property type="term" value="C:amphisome membrane"/>
    <property type="evidence" value="ECO:0000266"/>
    <property type="project" value="ComplexPortal"/>
</dbReference>
<dbReference type="GO" id="GO:0000421">
    <property type="term" value="C:autophagosome membrane"/>
    <property type="evidence" value="ECO:0000266"/>
    <property type="project" value="ComplexPortal"/>
</dbReference>
<dbReference type="GO" id="GO:0005829">
    <property type="term" value="C:cytosol"/>
    <property type="evidence" value="ECO:0000314"/>
    <property type="project" value="ParkinsonsUK-UCL"/>
</dbReference>
<dbReference type="GO" id="GO:0010008">
    <property type="term" value="C:endosome membrane"/>
    <property type="evidence" value="ECO:0000314"/>
    <property type="project" value="MGI"/>
</dbReference>
<dbReference type="GO" id="GO:0000815">
    <property type="term" value="C:ESCRT III complex"/>
    <property type="evidence" value="ECO:0000250"/>
    <property type="project" value="UniProtKB"/>
</dbReference>
<dbReference type="GO" id="GO:0000776">
    <property type="term" value="C:kinetochore"/>
    <property type="evidence" value="ECO:0000266"/>
    <property type="project" value="ComplexPortal"/>
</dbReference>
<dbReference type="GO" id="GO:0005828">
    <property type="term" value="C:kinetochore microtubule"/>
    <property type="evidence" value="ECO:0000266"/>
    <property type="project" value="ComplexPortal"/>
</dbReference>
<dbReference type="GO" id="GO:0005765">
    <property type="term" value="C:lysosomal membrane"/>
    <property type="evidence" value="ECO:0000266"/>
    <property type="project" value="ComplexPortal"/>
</dbReference>
<dbReference type="GO" id="GO:0016020">
    <property type="term" value="C:membrane"/>
    <property type="evidence" value="ECO:0000314"/>
    <property type="project" value="ParkinsonsUK-UCL"/>
</dbReference>
<dbReference type="GO" id="GO:0030496">
    <property type="term" value="C:midbody"/>
    <property type="evidence" value="ECO:0000266"/>
    <property type="project" value="ComplexPortal"/>
</dbReference>
<dbReference type="GO" id="GO:0032585">
    <property type="term" value="C:multivesicular body membrane"/>
    <property type="evidence" value="ECO:0000266"/>
    <property type="project" value="ComplexPortal"/>
</dbReference>
<dbReference type="GO" id="GO:0005635">
    <property type="term" value="C:nuclear envelope"/>
    <property type="evidence" value="ECO:0000250"/>
    <property type="project" value="UniProtKB"/>
</dbReference>
<dbReference type="GO" id="GO:0005643">
    <property type="term" value="C:nuclear pore"/>
    <property type="evidence" value="ECO:0000266"/>
    <property type="project" value="ComplexPortal"/>
</dbReference>
<dbReference type="GO" id="GO:0005634">
    <property type="term" value="C:nucleus"/>
    <property type="evidence" value="ECO:0000314"/>
    <property type="project" value="ParkinsonsUK-UCL"/>
</dbReference>
<dbReference type="GO" id="GO:0005886">
    <property type="term" value="C:plasma membrane"/>
    <property type="evidence" value="ECO:0000266"/>
    <property type="project" value="ComplexPortal"/>
</dbReference>
<dbReference type="GO" id="GO:0097352">
    <property type="term" value="P:autophagosome maturation"/>
    <property type="evidence" value="ECO:0000266"/>
    <property type="project" value="ComplexPortal"/>
</dbReference>
<dbReference type="GO" id="GO:0006914">
    <property type="term" value="P:autophagy"/>
    <property type="evidence" value="ECO:0000266"/>
    <property type="project" value="ComplexPortal"/>
</dbReference>
<dbReference type="GO" id="GO:0010458">
    <property type="term" value="P:exit from mitosis"/>
    <property type="evidence" value="ECO:0000250"/>
    <property type="project" value="UniProtKB"/>
</dbReference>
<dbReference type="GO" id="GO:1902774">
    <property type="term" value="P:late endosome to lysosome transport"/>
    <property type="evidence" value="ECO:0000266"/>
    <property type="project" value="ComplexPortal"/>
</dbReference>
<dbReference type="GO" id="GO:0090148">
    <property type="term" value="P:membrane fission"/>
    <property type="evidence" value="ECO:0000250"/>
    <property type="project" value="UniProtKB"/>
</dbReference>
<dbReference type="GO" id="GO:0061952">
    <property type="term" value="P:midbody abscission"/>
    <property type="evidence" value="ECO:0000266"/>
    <property type="project" value="ComplexPortal"/>
</dbReference>
<dbReference type="GO" id="GO:0000281">
    <property type="term" value="P:mitotic cytokinesis"/>
    <property type="evidence" value="ECO:0000250"/>
    <property type="project" value="UniProtKB"/>
</dbReference>
<dbReference type="GO" id="GO:0007080">
    <property type="term" value="P:mitotic metaphase chromosome alignment"/>
    <property type="evidence" value="ECO:0000266"/>
    <property type="project" value="ComplexPortal"/>
</dbReference>
<dbReference type="GO" id="GO:0036258">
    <property type="term" value="P:multivesicular body assembly"/>
    <property type="evidence" value="ECO:0000303"/>
    <property type="project" value="ComplexPortal"/>
</dbReference>
<dbReference type="GO" id="GO:0071985">
    <property type="term" value="P:multivesicular body sorting pathway"/>
    <property type="evidence" value="ECO:0000266"/>
    <property type="project" value="ComplexPortal"/>
</dbReference>
<dbReference type="GO" id="GO:0061763">
    <property type="term" value="P:multivesicular body-lysosome fusion"/>
    <property type="evidence" value="ECO:0000303"/>
    <property type="project" value="ComplexPortal"/>
</dbReference>
<dbReference type="GO" id="GO:0031468">
    <property type="term" value="P:nuclear membrane reassembly"/>
    <property type="evidence" value="ECO:0000250"/>
    <property type="project" value="UniProtKB"/>
</dbReference>
<dbReference type="GO" id="GO:0006997">
    <property type="term" value="P:nucleus organization"/>
    <property type="evidence" value="ECO:0000266"/>
    <property type="project" value="ComplexPortal"/>
</dbReference>
<dbReference type="GO" id="GO:0001778">
    <property type="term" value="P:plasma membrane repair"/>
    <property type="evidence" value="ECO:0000266"/>
    <property type="project" value="ComplexPortal"/>
</dbReference>
<dbReference type="GO" id="GO:0015031">
    <property type="term" value="P:protein transport"/>
    <property type="evidence" value="ECO:0007669"/>
    <property type="project" value="UniProtKB-KW"/>
</dbReference>
<dbReference type="GO" id="GO:0010506">
    <property type="term" value="P:regulation of autophagy"/>
    <property type="evidence" value="ECO:0000315"/>
    <property type="project" value="ParkinsonsUK-UCL"/>
</dbReference>
<dbReference type="GO" id="GO:1901673">
    <property type="term" value="P:regulation of mitotic spindle assembly"/>
    <property type="evidence" value="ECO:0000266"/>
    <property type="project" value="ComplexPortal"/>
</dbReference>
<dbReference type="GO" id="GO:0043162">
    <property type="term" value="P:ubiquitin-dependent protein catabolic process via the multivesicular body sorting pathway"/>
    <property type="evidence" value="ECO:0000266"/>
    <property type="project" value="ComplexPortal"/>
</dbReference>
<dbReference type="GO" id="GO:0051469">
    <property type="term" value="P:vesicle fusion with vacuole"/>
    <property type="evidence" value="ECO:0000303"/>
    <property type="project" value="ComplexPortal"/>
</dbReference>
<dbReference type="GO" id="GO:0046761">
    <property type="term" value="P:viral budding from plasma membrane"/>
    <property type="evidence" value="ECO:0000266"/>
    <property type="project" value="ComplexPortal"/>
</dbReference>
<dbReference type="GO" id="GO:0039702">
    <property type="term" value="P:viral budding via host ESCRT complex"/>
    <property type="evidence" value="ECO:0000266"/>
    <property type="project" value="ComplexPortal"/>
</dbReference>
<dbReference type="FunFam" id="1.10.287.1060:FF:000001">
    <property type="entry name" value="Charged multivesicular body protein 4b"/>
    <property type="match status" value="1"/>
</dbReference>
<dbReference type="Gene3D" id="6.10.250.1710">
    <property type="match status" value="1"/>
</dbReference>
<dbReference type="Gene3D" id="1.10.287.1060">
    <property type="entry name" value="ESAT-6-like"/>
    <property type="match status" value="1"/>
</dbReference>
<dbReference type="InterPro" id="IPR005024">
    <property type="entry name" value="Snf7_fam"/>
</dbReference>
<dbReference type="PANTHER" id="PTHR22761">
    <property type="entry name" value="CHARGED MULTIVESICULAR BODY PROTEIN"/>
    <property type="match status" value="1"/>
</dbReference>
<dbReference type="PANTHER" id="PTHR22761:SF4">
    <property type="entry name" value="CHARGED MULTIVESICULAR BODY PROTEIN 4B"/>
    <property type="match status" value="1"/>
</dbReference>
<dbReference type="Pfam" id="PF03357">
    <property type="entry name" value="Snf7"/>
    <property type="match status" value="1"/>
</dbReference>
<comment type="function">
    <text evidence="2">Probable core component of the endosomal sorting required for transport complex III (ESCRT-III) which is involved in multivesicular bodies (MVBs) formation and sorting of endosomal cargo proteins into MVBs. MVBs contain intraluminal vesicles (ILVs) that are generated by invagination and scission from the limiting membrane of the endosome and mostly are delivered to lysosomes enabling degradation of membrane proteins, such as stimulated growth factor receptors, lysosomal enzymes and lipids. The MVB pathway appears to require the sequential function of ESCRT-O, -I,-II and -III complexes. ESCRT-III proteins mostly dissociate from the invaginating membrane before the ILV is released. The ESCRT machinery also functions in topologically equivalent membrane fission events, such as the terminal stages of cytokinesis. Together with SPAST, the ESCRT-III complex promotes nuclear envelope sealing and mitotic spindle disassembly during late anaphase. Plays a role in the endosomal sorting pathway. ESCRT-III proteins are believed to mediate the necessary vesicle extrusion and/or membrane fission activities, possibly in conjunction with the AAA ATPase VPS4. When overexpressed, membrane-assembled circular arrays of CHMP4B filaments can promote or stabilize negative curvature and outward budding. CHMP4A/B/C are required for the exosomal release of SDCBP, CD63 and syndecan. Majority of the protein exists in a folded closed conformation (By similarity).</text>
</comment>
<comment type="subunit">
    <text evidence="2">Probable core component of the endosomal sorting required for transport complex III (ESCRT-III). ESCRT-III components are thought to multimerize to form a flat lattice on the perimeter membrane of the endosome. Several assembly forms of ESCRT-III may exist that interact and act sequentially. Interacts with CHMP6 and CHMP4C. Interacts with PDCD6IP; the interaction is direct. Interacts with VPS4A; the interaction is direct. Interacts with VPS4B; the interaction is direct. Interacts with CHMP7. Interacts with CFTR; the interaction requires misfolded CFTR. Interacts with PTPN23 (By similarity). Interacts with CC2D1B (By similarity).</text>
</comment>
<comment type="interaction">
    <interactant intactId="EBI-8322817">
        <id>Q9D8B3</id>
    </interactant>
    <interactant intactId="EBI-310624">
        <id>Q8WUM4</id>
        <label>PDCD6IP</label>
    </interactant>
    <organismsDiffer>true</organismsDiffer>
    <experiments>2</experiments>
</comment>
<comment type="subcellular location">
    <subcellularLocation>
        <location evidence="2">Cytoplasm</location>
        <location evidence="2">Cytosol</location>
    </subcellularLocation>
    <subcellularLocation>
        <location evidence="2">Late endosome membrane</location>
        <topology evidence="2">Peripheral membrane protein</topology>
    </subcellularLocation>
    <subcellularLocation>
        <location evidence="2">Midbody</location>
    </subcellularLocation>
    <subcellularLocation>
        <location evidence="2">Nucleus envelope</location>
    </subcellularLocation>
    <text evidence="2">Recruited to the nuclear envelope by CHMP7 during late anaphase. Localizes transiently to the midbody arms immediately before abscission.</text>
</comment>
<comment type="domain">
    <text evidence="1">The acidic C-terminus and the basic N-termminus are thought to render the protein in a closed, soluble and inactive conformation through an autoinhibitory intramolecular interaction. The open and active conformation, which enables membrane binding and oligomerization, is achieved by interaction with other cellular binding partners, probably including other ESCRT components (By similarity).</text>
</comment>
<comment type="PTM">
    <text evidence="1">ISGylated. Isgylation weakens its interaction with VPS4A (By similarity).</text>
</comment>
<comment type="similarity">
    <text evidence="5">Belongs to the SNF7 family.</text>
</comment>
<comment type="sequence caution" evidence="5">
    <conflict type="erroneous initiation">
        <sequence resource="EMBL-CDS" id="AAH06905"/>
    </conflict>
</comment>
<comment type="sequence caution" evidence="5">
    <conflict type="erroneous termination">
        <sequence resource="EMBL" id="AK008205"/>
    </conflict>
    <text>Truncated C-terminus.</text>
</comment>
<proteinExistence type="evidence at protein level"/>